<name>NS3D_BCHK4</name>
<organism>
    <name type="scientific">Bat coronavirus HKU4</name>
    <name type="common">BtCoV</name>
    <name type="synonym">BtCoV/HKU4/2004</name>
    <dbReference type="NCBI Taxonomy" id="694007"/>
    <lineage>
        <taxon>Viruses</taxon>
        <taxon>Riboviria</taxon>
        <taxon>Orthornavirae</taxon>
        <taxon>Pisuviricota</taxon>
        <taxon>Pisoniviricetes</taxon>
        <taxon>Nidovirales</taxon>
        <taxon>Cornidovirineae</taxon>
        <taxon>Coronaviridae</taxon>
        <taxon>Orthocoronavirinae</taxon>
        <taxon>Betacoronavirus</taxon>
        <taxon>Merbecovirus</taxon>
    </lineage>
</organism>
<dbReference type="EMBL" id="EF065505">
    <property type="protein sequence ID" value="ABN10843.1"/>
    <property type="molecule type" value="Genomic_RNA"/>
</dbReference>
<dbReference type="KEGG" id="vg:4835995"/>
<dbReference type="OrthoDB" id="16322at10239"/>
<dbReference type="Proteomes" id="UP000006574">
    <property type="component" value="Genome"/>
</dbReference>
<dbReference type="GO" id="GO:0033644">
    <property type="term" value="C:host cell membrane"/>
    <property type="evidence" value="ECO:0007669"/>
    <property type="project" value="UniProtKB-SubCell"/>
</dbReference>
<dbReference type="GO" id="GO:0016020">
    <property type="term" value="C:membrane"/>
    <property type="evidence" value="ECO:0007669"/>
    <property type="project" value="UniProtKB-KW"/>
</dbReference>
<dbReference type="CDD" id="cd21645">
    <property type="entry name" value="MERS-CoV-like_ORF5"/>
    <property type="match status" value="1"/>
</dbReference>
<dbReference type="InterPro" id="IPR046446">
    <property type="entry name" value="a/bCoV_VIROPORIN_3A-like_CD"/>
</dbReference>
<dbReference type="InterPro" id="IPR046445">
    <property type="entry name" value="a/bCoV_VIROPORIN_3A-like_TM"/>
</dbReference>
<dbReference type="InterPro" id="IPR044323">
    <property type="entry name" value="MERS-CoV-like_ORF5"/>
</dbReference>
<dbReference type="PROSITE" id="PS51967">
    <property type="entry name" value="COV_VIROPORIN_3A_CD"/>
    <property type="match status" value="1"/>
</dbReference>
<dbReference type="PROSITE" id="PS51966">
    <property type="entry name" value="COV_VIROPORIN_3A_TM"/>
    <property type="match status" value="1"/>
</dbReference>
<accession>A3EX98</accession>
<protein>
    <recommendedName>
        <fullName>Non-structural protein 3d</fullName>
        <shortName>ns3d</shortName>
    </recommendedName>
    <alternativeName>
        <fullName>Accessory protein 3d</fullName>
    </alternativeName>
</protein>
<proteinExistence type="predicted"/>
<evidence type="ECO:0000255" key="1"/>
<evidence type="ECO:0000255" key="2">
    <source>
        <dbReference type="PROSITE-ProRule" id="PRU01311"/>
    </source>
</evidence>
<evidence type="ECO:0000255" key="3">
    <source>
        <dbReference type="PROSITE-ProRule" id="PRU01312"/>
    </source>
</evidence>
<evidence type="ECO:0000305" key="4"/>
<feature type="chain" id="PRO_0000290271" description="Non-structural protein 3d">
    <location>
        <begin position="1"/>
        <end position="227"/>
    </location>
</feature>
<feature type="transmembrane region" description="Helical" evidence="1">
    <location>
        <begin position="39"/>
        <end position="59"/>
    </location>
</feature>
<feature type="transmembrane region" description="Helical" evidence="1">
    <location>
        <begin position="71"/>
        <end position="91"/>
    </location>
</feature>
<feature type="transmembrane region" description="Helical" evidence="1">
    <location>
        <begin position="93"/>
        <end position="113"/>
    </location>
</feature>
<feature type="domain" description="CoV 3a-like viroporin TM" evidence="2">
    <location>
        <begin position="27"/>
        <end position="130"/>
    </location>
</feature>
<feature type="domain" description="CoV 3a-like viroporin CD" evidence="3">
    <location>
        <begin position="134"/>
        <end position="191"/>
    </location>
</feature>
<reference key="1">
    <citation type="journal article" date="2007" name="J. Virol.">
        <title>Comparative analysis of twelve genomes of three novel group 2c and group 2d coronaviruses reveals unique group and subgroup features.</title>
        <authorList>
            <person name="Woo P.C.Y."/>
            <person name="Wang M."/>
            <person name="Lau S.K.P."/>
            <person name="Xu H.F."/>
            <person name="Poon R.W.S."/>
            <person name="Guo R."/>
            <person name="Wong B.H.L."/>
            <person name="Gao K."/>
            <person name="Tsoi H.-W."/>
            <person name="Huang Y."/>
            <person name="Li K.S.M."/>
            <person name="Lam C.S.F."/>
            <person name="Chan K.-H."/>
            <person name="Zheng B.-J."/>
            <person name="Yuen K.-Y."/>
        </authorList>
    </citation>
    <scope>NUCLEOTIDE SEQUENCE [GENOMIC RNA]</scope>
    <source>
        <strain>Isolate HKU4-1</strain>
    </source>
</reference>
<sequence>MAFSASLFRTKTVHTEDAFCPRSAIQAEQPPNIIDCIPVAGYEAALITNALFLLVLFVFNPLTCKGNWIKAILFYSLLLYNMILAIFLVVDTQHFVSALLLAYVVTFLVLWTADRIRLSCAVGSVLPFVDMRSSYIRVDNGNSSVVVPMNHTKHWFIRNFEQSCHCENCFYIHSSSYVECTFISRLKKSILVSVCDFSLGGNVSTVFVPSSDKTVPLHIIAPSKLYV</sequence>
<gene>
    <name type="ORF">3d</name>
</gene>
<keyword id="KW-1043">Host membrane</keyword>
<keyword id="KW-0472">Membrane</keyword>
<keyword id="KW-1185">Reference proteome</keyword>
<keyword id="KW-0812">Transmembrane</keyword>
<keyword id="KW-1133">Transmembrane helix</keyword>
<organismHost>
    <name type="scientific">Tylonycteris pachypus</name>
    <name type="common">Lesser bamboo bat</name>
    <name type="synonym">Vespertilio pachypus</name>
    <dbReference type="NCBI Taxonomy" id="258959"/>
</organismHost>
<comment type="subcellular location">
    <subcellularLocation>
        <location evidence="4">Host membrane</location>
        <topology evidence="4">Multi-pass membrane protein</topology>
    </subcellularLocation>
</comment>